<reference key="1">
    <citation type="journal article" date="1997" name="Nature">
        <title>The complete genome sequence of the Gram-positive bacterium Bacillus subtilis.</title>
        <authorList>
            <person name="Kunst F."/>
            <person name="Ogasawara N."/>
            <person name="Moszer I."/>
            <person name="Albertini A.M."/>
            <person name="Alloni G."/>
            <person name="Azevedo V."/>
            <person name="Bertero M.G."/>
            <person name="Bessieres P."/>
            <person name="Bolotin A."/>
            <person name="Borchert S."/>
            <person name="Borriss R."/>
            <person name="Boursier L."/>
            <person name="Brans A."/>
            <person name="Braun M."/>
            <person name="Brignell S.C."/>
            <person name="Bron S."/>
            <person name="Brouillet S."/>
            <person name="Bruschi C.V."/>
            <person name="Caldwell B."/>
            <person name="Capuano V."/>
            <person name="Carter N.M."/>
            <person name="Choi S.-K."/>
            <person name="Codani J.-J."/>
            <person name="Connerton I.F."/>
            <person name="Cummings N.J."/>
            <person name="Daniel R.A."/>
            <person name="Denizot F."/>
            <person name="Devine K.M."/>
            <person name="Duesterhoeft A."/>
            <person name="Ehrlich S.D."/>
            <person name="Emmerson P.T."/>
            <person name="Entian K.-D."/>
            <person name="Errington J."/>
            <person name="Fabret C."/>
            <person name="Ferrari E."/>
            <person name="Foulger D."/>
            <person name="Fritz C."/>
            <person name="Fujita M."/>
            <person name="Fujita Y."/>
            <person name="Fuma S."/>
            <person name="Galizzi A."/>
            <person name="Galleron N."/>
            <person name="Ghim S.-Y."/>
            <person name="Glaser P."/>
            <person name="Goffeau A."/>
            <person name="Golightly E.J."/>
            <person name="Grandi G."/>
            <person name="Guiseppi G."/>
            <person name="Guy B.J."/>
            <person name="Haga K."/>
            <person name="Haiech J."/>
            <person name="Harwood C.R."/>
            <person name="Henaut A."/>
            <person name="Hilbert H."/>
            <person name="Holsappel S."/>
            <person name="Hosono S."/>
            <person name="Hullo M.-F."/>
            <person name="Itaya M."/>
            <person name="Jones L.-M."/>
            <person name="Joris B."/>
            <person name="Karamata D."/>
            <person name="Kasahara Y."/>
            <person name="Klaerr-Blanchard M."/>
            <person name="Klein C."/>
            <person name="Kobayashi Y."/>
            <person name="Koetter P."/>
            <person name="Koningstein G."/>
            <person name="Krogh S."/>
            <person name="Kumano M."/>
            <person name="Kurita K."/>
            <person name="Lapidus A."/>
            <person name="Lardinois S."/>
            <person name="Lauber J."/>
            <person name="Lazarevic V."/>
            <person name="Lee S.-M."/>
            <person name="Levine A."/>
            <person name="Liu H."/>
            <person name="Masuda S."/>
            <person name="Mauel C."/>
            <person name="Medigue C."/>
            <person name="Medina N."/>
            <person name="Mellado R.P."/>
            <person name="Mizuno M."/>
            <person name="Moestl D."/>
            <person name="Nakai S."/>
            <person name="Noback M."/>
            <person name="Noone D."/>
            <person name="O'Reilly M."/>
            <person name="Ogawa K."/>
            <person name="Ogiwara A."/>
            <person name="Oudega B."/>
            <person name="Park S.-H."/>
            <person name="Parro V."/>
            <person name="Pohl T.M."/>
            <person name="Portetelle D."/>
            <person name="Porwollik S."/>
            <person name="Prescott A.M."/>
            <person name="Presecan E."/>
            <person name="Pujic P."/>
            <person name="Purnelle B."/>
            <person name="Rapoport G."/>
            <person name="Rey M."/>
            <person name="Reynolds S."/>
            <person name="Rieger M."/>
            <person name="Rivolta C."/>
            <person name="Rocha E."/>
            <person name="Roche B."/>
            <person name="Rose M."/>
            <person name="Sadaie Y."/>
            <person name="Sato T."/>
            <person name="Scanlan E."/>
            <person name="Schleich S."/>
            <person name="Schroeter R."/>
            <person name="Scoffone F."/>
            <person name="Sekiguchi J."/>
            <person name="Sekowska A."/>
            <person name="Seror S.J."/>
            <person name="Serror P."/>
            <person name="Shin B.-S."/>
            <person name="Soldo B."/>
            <person name="Sorokin A."/>
            <person name="Tacconi E."/>
            <person name="Takagi T."/>
            <person name="Takahashi H."/>
            <person name="Takemaru K."/>
            <person name="Takeuchi M."/>
            <person name="Tamakoshi A."/>
            <person name="Tanaka T."/>
            <person name="Terpstra P."/>
            <person name="Tognoni A."/>
            <person name="Tosato V."/>
            <person name="Uchiyama S."/>
            <person name="Vandenbol M."/>
            <person name="Vannier F."/>
            <person name="Vassarotti A."/>
            <person name="Viari A."/>
            <person name="Wambutt R."/>
            <person name="Wedler E."/>
            <person name="Wedler H."/>
            <person name="Weitzenegger T."/>
            <person name="Winters P."/>
            <person name="Wipat A."/>
            <person name="Yamamoto H."/>
            <person name="Yamane K."/>
            <person name="Yasumoto K."/>
            <person name="Yata K."/>
            <person name="Yoshida K."/>
            <person name="Yoshikawa H.-F."/>
            <person name="Zumstein E."/>
            <person name="Yoshikawa H."/>
            <person name="Danchin A."/>
        </authorList>
    </citation>
    <scope>NUCLEOTIDE SEQUENCE [LARGE SCALE GENOMIC DNA]</scope>
    <source>
        <strain>168</strain>
    </source>
</reference>
<gene>
    <name type="primary">yyzF</name>
    <name type="ordered locus">BSU40239</name>
</gene>
<keyword id="KW-1185">Reference proteome</keyword>
<proteinExistence type="predicted"/>
<accession>C0H3T9</accession>
<dbReference type="EMBL" id="AL009126">
    <property type="protein sequence ID" value="CAX52715.1"/>
    <property type="molecule type" value="Genomic_DNA"/>
</dbReference>
<dbReference type="RefSeq" id="WP_003219122.1">
    <property type="nucleotide sequence ID" value="NZ_OZ025638.1"/>
</dbReference>
<dbReference type="RefSeq" id="YP_003097800.1">
    <property type="nucleotide sequence ID" value="NC_000964.3"/>
</dbReference>
<dbReference type="SMR" id="C0H3T9"/>
<dbReference type="FunCoup" id="C0H3T9">
    <property type="interactions" value="1"/>
</dbReference>
<dbReference type="STRING" id="224308.BSU40239"/>
<dbReference type="PaxDb" id="224308-BSU40239"/>
<dbReference type="EnsemblBacteria" id="CAX52715">
    <property type="protein sequence ID" value="CAX52715"/>
    <property type="gene ID" value="BSU_40239"/>
</dbReference>
<dbReference type="GeneID" id="8303139"/>
<dbReference type="KEGG" id="bsu:BSU40239"/>
<dbReference type="PATRIC" id="fig|224308.43.peg.4221"/>
<dbReference type="InParanoid" id="C0H3T9"/>
<dbReference type="OrthoDB" id="1652387at2"/>
<dbReference type="BioCyc" id="BSUB:BSU40239-MONOMER"/>
<dbReference type="Proteomes" id="UP000001570">
    <property type="component" value="Chromosome"/>
</dbReference>
<dbReference type="InterPro" id="IPR025626">
    <property type="entry name" value="YyzF"/>
</dbReference>
<dbReference type="NCBIfam" id="TIGR04129">
    <property type="entry name" value="CxxH_BA5709"/>
    <property type="match status" value="1"/>
</dbReference>
<dbReference type="Pfam" id="PF14116">
    <property type="entry name" value="YyzF"/>
    <property type="match status" value="1"/>
</dbReference>
<name>YYZF_BACSU</name>
<sequence length="56" mass="6415">MKQAYYSCEEHIETVLDMYIDDHELPPEIRKIEHTNSLSTACELCGDPAVYIVGNE</sequence>
<protein>
    <recommendedName>
        <fullName>Uncharacterized protein YyzF</fullName>
    </recommendedName>
</protein>
<organism>
    <name type="scientific">Bacillus subtilis (strain 168)</name>
    <dbReference type="NCBI Taxonomy" id="224308"/>
    <lineage>
        <taxon>Bacteria</taxon>
        <taxon>Bacillati</taxon>
        <taxon>Bacillota</taxon>
        <taxon>Bacilli</taxon>
        <taxon>Bacillales</taxon>
        <taxon>Bacillaceae</taxon>
        <taxon>Bacillus</taxon>
    </lineage>
</organism>
<feature type="chain" id="PRO_0000380089" description="Uncharacterized protein YyzF">
    <location>
        <begin position="1"/>
        <end position="56"/>
    </location>
</feature>